<comment type="function">
    <text evidence="1">Catalyzes the ATP-dependent transfer of a sulfur to tRNA to produce 4-thiouridine in position 8 of tRNAs, which functions as a near-UV photosensor. Also catalyzes the transfer of sulfur to the sulfur carrier protein ThiS, forming ThiS-thiocarboxylate. This is a step in the synthesis of thiazole, in the thiamine biosynthesis pathway. The sulfur is donated as persulfide by IscS.</text>
</comment>
<comment type="catalytic activity">
    <reaction evidence="1">
        <text>[ThiI sulfur-carrier protein]-S-sulfanyl-L-cysteine + a uridine in tRNA + 2 reduced [2Fe-2S]-[ferredoxin] + ATP + H(+) = [ThiI sulfur-carrier protein]-L-cysteine + a 4-thiouridine in tRNA + 2 oxidized [2Fe-2S]-[ferredoxin] + AMP + diphosphate</text>
        <dbReference type="Rhea" id="RHEA:24176"/>
        <dbReference type="Rhea" id="RHEA-COMP:10000"/>
        <dbReference type="Rhea" id="RHEA-COMP:10001"/>
        <dbReference type="Rhea" id="RHEA-COMP:13337"/>
        <dbReference type="Rhea" id="RHEA-COMP:13338"/>
        <dbReference type="Rhea" id="RHEA-COMP:13339"/>
        <dbReference type="Rhea" id="RHEA-COMP:13340"/>
        <dbReference type="ChEBI" id="CHEBI:15378"/>
        <dbReference type="ChEBI" id="CHEBI:29950"/>
        <dbReference type="ChEBI" id="CHEBI:30616"/>
        <dbReference type="ChEBI" id="CHEBI:33019"/>
        <dbReference type="ChEBI" id="CHEBI:33737"/>
        <dbReference type="ChEBI" id="CHEBI:33738"/>
        <dbReference type="ChEBI" id="CHEBI:61963"/>
        <dbReference type="ChEBI" id="CHEBI:65315"/>
        <dbReference type="ChEBI" id="CHEBI:136798"/>
        <dbReference type="ChEBI" id="CHEBI:456215"/>
        <dbReference type="EC" id="2.8.1.4"/>
    </reaction>
</comment>
<comment type="catalytic activity">
    <reaction evidence="1">
        <text>[ThiS sulfur-carrier protein]-C-terminal Gly-Gly-AMP + S-sulfanyl-L-cysteinyl-[cysteine desulfurase] + AH2 = [ThiS sulfur-carrier protein]-C-terminal-Gly-aminoethanethioate + L-cysteinyl-[cysteine desulfurase] + A + AMP + 2 H(+)</text>
        <dbReference type="Rhea" id="RHEA:43340"/>
        <dbReference type="Rhea" id="RHEA-COMP:12157"/>
        <dbReference type="Rhea" id="RHEA-COMP:12158"/>
        <dbReference type="Rhea" id="RHEA-COMP:12910"/>
        <dbReference type="Rhea" id="RHEA-COMP:19908"/>
        <dbReference type="ChEBI" id="CHEBI:13193"/>
        <dbReference type="ChEBI" id="CHEBI:15378"/>
        <dbReference type="ChEBI" id="CHEBI:17499"/>
        <dbReference type="ChEBI" id="CHEBI:29950"/>
        <dbReference type="ChEBI" id="CHEBI:61963"/>
        <dbReference type="ChEBI" id="CHEBI:90618"/>
        <dbReference type="ChEBI" id="CHEBI:232372"/>
        <dbReference type="ChEBI" id="CHEBI:456215"/>
    </reaction>
</comment>
<comment type="pathway">
    <text evidence="1">Cofactor biosynthesis; thiamine diphosphate biosynthesis.</text>
</comment>
<comment type="subcellular location">
    <subcellularLocation>
        <location evidence="1">Cytoplasm</location>
    </subcellularLocation>
</comment>
<comment type="similarity">
    <text evidence="1">Belongs to the ThiI family.</text>
</comment>
<organism>
    <name type="scientific">Histophilus somni (strain 129Pt)</name>
    <name type="common">Haemophilus somnus</name>
    <dbReference type="NCBI Taxonomy" id="205914"/>
    <lineage>
        <taxon>Bacteria</taxon>
        <taxon>Pseudomonadati</taxon>
        <taxon>Pseudomonadota</taxon>
        <taxon>Gammaproteobacteria</taxon>
        <taxon>Pasteurellales</taxon>
        <taxon>Pasteurellaceae</taxon>
        <taxon>Histophilus</taxon>
    </lineage>
</organism>
<sequence length="484" mass="54756">MKFIIKLFPEIMIKSESVRKRFVKILTGNIRNVLNKYDDTVAVVKHWDYIEVRSKNIENRILLVELLGRIPGIHHFLEVEEKPFVTLHDIFEQTLSDVATQIENKTFCVRVKRKGKHDFSSLDAERYIGGGLNQAVASAKVQLSKPDVTVRIDIENDKMMLIKARHQGIGGYPIGTQEDVLSLISGGFDSGVSSYMLIRRGSRVHYCFFNLGGATHEIGVKQMAYHIWKRFSGSHKVRFVAINFEQVVAEILEKVDNGQMGVVLKRMMVRAASKVAQRFGIQAIVTGEALGQVSSQTLTNLRLIDEAAESLVLRPLITHDKEQIIAKAKEIGTEDIAKSMPEFCGVISKSPTVKAVKEKIEQEESYFDFSVLESAVQNAQYLDIRQIAEQTKKEVFEVDEITVLSANDVILDIRSPEEVDDKPLEISGQNIILMPFYKLSSHFAELDQSKNYVLYCERGVMSKLQALYLREKGFDNVKVLNKIS</sequence>
<name>THII_HISS1</name>
<accession>Q0I3G4</accession>
<evidence type="ECO:0000255" key="1">
    <source>
        <dbReference type="HAMAP-Rule" id="MF_00021"/>
    </source>
</evidence>
<reference key="1">
    <citation type="journal article" date="2007" name="J. Bacteriol.">
        <title>Complete genome sequence of Haemophilus somnus (Histophilus somni) strain 129Pt and comparison to Haemophilus ducreyi 35000HP and Haemophilus influenzae Rd.</title>
        <authorList>
            <person name="Challacombe J.F."/>
            <person name="Duncan A.J."/>
            <person name="Brettin T.S."/>
            <person name="Bruce D."/>
            <person name="Chertkov O."/>
            <person name="Detter J.C."/>
            <person name="Han C.S."/>
            <person name="Misra M."/>
            <person name="Richardson P."/>
            <person name="Tapia R."/>
            <person name="Thayer N."/>
            <person name="Xie G."/>
            <person name="Inzana T.J."/>
        </authorList>
    </citation>
    <scope>NUCLEOTIDE SEQUENCE [LARGE SCALE GENOMIC DNA]</scope>
    <source>
        <strain>129Pt</strain>
    </source>
</reference>
<keyword id="KW-0067">ATP-binding</keyword>
<keyword id="KW-0963">Cytoplasm</keyword>
<keyword id="KW-1015">Disulfide bond</keyword>
<keyword id="KW-0547">Nucleotide-binding</keyword>
<keyword id="KW-0676">Redox-active center</keyword>
<keyword id="KW-0694">RNA-binding</keyword>
<keyword id="KW-0784">Thiamine biosynthesis</keyword>
<keyword id="KW-0808">Transferase</keyword>
<keyword id="KW-0820">tRNA-binding</keyword>
<protein>
    <recommendedName>
        <fullName evidence="1">tRNA sulfurtransferase</fullName>
        <ecNumber evidence="1">2.8.1.4</ecNumber>
    </recommendedName>
    <alternativeName>
        <fullName evidence="1">Sulfur carrier protein ThiS sulfurtransferase</fullName>
    </alternativeName>
    <alternativeName>
        <fullName evidence="1">Thiamine biosynthesis protein ThiI</fullName>
    </alternativeName>
    <alternativeName>
        <fullName evidence="1">tRNA 4-thiouridine synthase</fullName>
    </alternativeName>
</protein>
<feature type="chain" id="PRO_1000074229" description="tRNA sulfurtransferase">
    <location>
        <begin position="1"/>
        <end position="484"/>
    </location>
</feature>
<feature type="domain" description="THUMP" evidence="1">
    <location>
        <begin position="61"/>
        <end position="165"/>
    </location>
</feature>
<feature type="domain" description="Rhodanese" evidence="1">
    <location>
        <begin position="404"/>
        <end position="484"/>
    </location>
</feature>
<feature type="active site" description="Cysteine persulfide intermediate" evidence="1">
    <location>
        <position position="456"/>
    </location>
</feature>
<feature type="binding site" evidence="1">
    <location>
        <begin position="183"/>
        <end position="184"/>
    </location>
    <ligand>
        <name>ATP</name>
        <dbReference type="ChEBI" id="CHEBI:30616"/>
    </ligand>
</feature>
<feature type="binding site" evidence="1">
    <location>
        <position position="265"/>
    </location>
    <ligand>
        <name>ATP</name>
        <dbReference type="ChEBI" id="CHEBI:30616"/>
    </ligand>
</feature>
<feature type="binding site" evidence="1">
    <location>
        <position position="287"/>
    </location>
    <ligand>
        <name>ATP</name>
        <dbReference type="ChEBI" id="CHEBI:30616"/>
    </ligand>
</feature>
<feature type="binding site" evidence="1">
    <location>
        <position position="296"/>
    </location>
    <ligand>
        <name>ATP</name>
        <dbReference type="ChEBI" id="CHEBI:30616"/>
    </ligand>
</feature>
<feature type="disulfide bond" description="Redox-active" evidence="1">
    <location>
        <begin position="344"/>
        <end position="456"/>
    </location>
</feature>
<gene>
    <name evidence="1" type="primary">thiI</name>
    <name type="ordered locus">HS_0902</name>
</gene>
<dbReference type="EC" id="2.8.1.4" evidence="1"/>
<dbReference type="EMBL" id="CP000436">
    <property type="protein sequence ID" value="ABI25177.1"/>
    <property type="molecule type" value="Genomic_DNA"/>
</dbReference>
<dbReference type="SMR" id="Q0I3G4"/>
<dbReference type="KEGG" id="hso:HS_0902"/>
<dbReference type="eggNOG" id="COG0301">
    <property type="taxonomic scope" value="Bacteria"/>
</dbReference>
<dbReference type="eggNOG" id="COG0607">
    <property type="taxonomic scope" value="Bacteria"/>
</dbReference>
<dbReference type="HOGENOM" id="CLU_037952_4_1_6"/>
<dbReference type="UniPathway" id="UPA00060"/>
<dbReference type="GO" id="GO:0005829">
    <property type="term" value="C:cytosol"/>
    <property type="evidence" value="ECO:0007669"/>
    <property type="project" value="TreeGrafter"/>
</dbReference>
<dbReference type="GO" id="GO:0005524">
    <property type="term" value="F:ATP binding"/>
    <property type="evidence" value="ECO:0007669"/>
    <property type="project" value="UniProtKB-UniRule"/>
</dbReference>
<dbReference type="GO" id="GO:0004810">
    <property type="term" value="F:CCA tRNA nucleotidyltransferase activity"/>
    <property type="evidence" value="ECO:0007669"/>
    <property type="project" value="InterPro"/>
</dbReference>
<dbReference type="GO" id="GO:0000049">
    <property type="term" value="F:tRNA binding"/>
    <property type="evidence" value="ECO:0007669"/>
    <property type="project" value="UniProtKB-UniRule"/>
</dbReference>
<dbReference type="GO" id="GO:0140741">
    <property type="term" value="F:tRNA-uracil-4 sulfurtransferase activity"/>
    <property type="evidence" value="ECO:0007669"/>
    <property type="project" value="UniProtKB-EC"/>
</dbReference>
<dbReference type="GO" id="GO:0009228">
    <property type="term" value="P:thiamine biosynthetic process"/>
    <property type="evidence" value="ECO:0007669"/>
    <property type="project" value="UniProtKB-KW"/>
</dbReference>
<dbReference type="GO" id="GO:0009229">
    <property type="term" value="P:thiamine diphosphate biosynthetic process"/>
    <property type="evidence" value="ECO:0007669"/>
    <property type="project" value="UniProtKB-UniRule"/>
</dbReference>
<dbReference type="GO" id="GO:0052837">
    <property type="term" value="P:thiazole biosynthetic process"/>
    <property type="evidence" value="ECO:0007669"/>
    <property type="project" value="InterPro"/>
</dbReference>
<dbReference type="GO" id="GO:0002937">
    <property type="term" value="P:tRNA 4-thiouridine biosynthesis"/>
    <property type="evidence" value="ECO:0007669"/>
    <property type="project" value="TreeGrafter"/>
</dbReference>
<dbReference type="CDD" id="cd01712">
    <property type="entry name" value="PPase_ThiI"/>
    <property type="match status" value="1"/>
</dbReference>
<dbReference type="CDD" id="cd00158">
    <property type="entry name" value="RHOD"/>
    <property type="match status" value="1"/>
</dbReference>
<dbReference type="CDD" id="cd11716">
    <property type="entry name" value="THUMP_ThiI"/>
    <property type="match status" value="1"/>
</dbReference>
<dbReference type="FunFam" id="3.30.2130.30:FF:000002">
    <property type="entry name" value="tRNA sulfurtransferase"/>
    <property type="match status" value="1"/>
</dbReference>
<dbReference type="FunFam" id="3.40.50.620:FF:000029">
    <property type="entry name" value="tRNA sulfurtransferase"/>
    <property type="match status" value="1"/>
</dbReference>
<dbReference type="Gene3D" id="3.30.2130.30">
    <property type="match status" value="1"/>
</dbReference>
<dbReference type="Gene3D" id="3.40.50.620">
    <property type="entry name" value="HUPs"/>
    <property type="match status" value="1"/>
</dbReference>
<dbReference type="Gene3D" id="3.40.250.10">
    <property type="entry name" value="Rhodanese-like domain"/>
    <property type="match status" value="1"/>
</dbReference>
<dbReference type="HAMAP" id="MF_00021">
    <property type="entry name" value="ThiI"/>
    <property type="match status" value="1"/>
</dbReference>
<dbReference type="InterPro" id="IPR001763">
    <property type="entry name" value="Rhodanese-like_dom"/>
</dbReference>
<dbReference type="InterPro" id="IPR036873">
    <property type="entry name" value="Rhodanese-like_dom_sf"/>
</dbReference>
<dbReference type="InterPro" id="IPR014729">
    <property type="entry name" value="Rossmann-like_a/b/a_fold"/>
</dbReference>
<dbReference type="InterPro" id="IPR020536">
    <property type="entry name" value="ThiI_AANH"/>
</dbReference>
<dbReference type="InterPro" id="IPR054173">
    <property type="entry name" value="ThiI_fer"/>
</dbReference>
<dbReference type="InterPro" id="IPR049961">
    <property type="entry name" value="ThiI_N"/>
</dbReference>
<dbReference type="InterPro" id="IPR026340">
    <property type="entry name" value="THII_Thiazole_biosynth_dom"/>
</dbReference>
<dbReference type="InterPro" id="IPR004114">
    <property type="entry name" value="THUMP_dom"/>
</dbReference>
<dbReference type="InterPro" id="IPR049962">
    <property type="entry name" value="THUMP_ThiI"/>
</dbReference>
<dbReference type="InterPro" id="IPR003720">
    <property type="entry name" value="tRNA_STrfase"/>
</dbReference>
<dbReference type="InterPro" id="IPR050102">
    <property type="entry name" value="tRNA_sulfurtransferase_ThiI"/>
</dbReference>
<dbReference type="NCBIfam" id="TIGR04271">
    <property type="entry name" value="ThiI_C_thiazole"/>
    <property type="match status" value="1"/>
</dbReference>
<dbReference type="NCBIfam" id="TIGR00342">
    <property type="entry name" value="tRNA uracil 4-sulfurtransferase ThiI"/>
    <property type="match status" value="1"/>
</dbReference>
<dbReference type="PANTHER" id="PTHR43209">
    <property type="entry name" value="TRNA SULFURTRANSFERASE"/>
    <property type="match status" value="1"/>
</dbReference>
<dbReference type="PANTHER" id="PTHR43209:SF1">
    <property type="entry name" value="TRNA SULFURTRANSFERASE"/>
    <property type="match status" value="1"/>
</dbReference>
<dbReference type="Pfam" id="PF00581">
    <property type="entry name" value="Rhodanese"/>
    <property type="match status" value="1"/>
</dbReference>
<dbReference type="Pfam" id="PF02568">
    <property type="entry name" value="ThiI"/>
    <property type="match status" value="1"/>
</dbReference>
<dbReference type="Pfam" id="PF22025">
    <property type="entry name" value="ThiI_fer"/>
    <property type="match status" value="1"/>
</dbReference>
<dbReference type="Pfam" id="PF02926">
    <property type="entry name" value="THUMP"/>
    <property type="match status" value="1"/>
</dbReference>
<dbReference type="SMART" id="SM00981">
    <property type="entry name" value="THUMP"/>
    <property type="match status" value="1"/>
</dbReference>
<dbReference type="SUPFAM" id="SSF52402">
    <property type="entry name" value="Adenine nucleotide alpha hydrolases-like"/>
    <property type="match status" value="1"/>
</dbReference>
<dbReference type="SUPFAM" id="SSF52821">
    <property type="entry name" value="Rhodanese/Cell cycle control phosphatase"/>
    <property type="match status" value="1"/>
</dbReference>
<dbReference type="SUPFAM" id="SSF143437">
    <property type="entry name" value="THUMP domain-like"/>
    <property type="match status" value="1"/>
</dbReference>
<dbReference type="PROSITE" id="PS50206">
    <property type="entry name" value="RHODANESE_3"/>
    <property type="match status" value="1"/>
</dbReference>
<dbReference type="PROSITE" id="PS51165">
    <property type="entry name" value="THUMP"/>
    <property type="match status" value="1"/>
</dbReference>
<proteinExistence type="inferred from homology"/>